<comment type="subcellular location">
    <subcellularLocation>
        <location evidence="3">Spore core</location>
    </subcellularLocation>
</comment>
<comment type="induction">
    <text evidence="2">Expressed only in the forespore compartment of sporulating cells. Expression is sigma F and sigma G-dependent.</text>
</comment>
<comment type="similarity">
    <text evidence="3">Belongs to the SspN family.</text>
</comment>
<accession>Q7WY69</accession>
<evidence type="ECO:0000256" key="1">
    <source>
        <dbReference type="SAM" id="MobiDB-lite"/>
    </source>
</evidence>
<evidence type="ECO:0000269" key="2">
    <source>
    </source>
</evidence>
<evidence type="ECO:0000305" key="3"/>
<sequence>MGNNKKNGQPQYAPSHLGTKPVKYKANKGEKMHDTSGQRPIIMQTKGE</sequence>
<keyword id="KW-1185">Reference proteome</keyword>
<keyword id="KW-0749">Sporulation</keyword>
<feature type="chain" id="PRO_0000221471" description="Small, acid-soluble spore protein N">
    <location>
        <begin position="1"/>
        <end position="48"/>
    </location>
</feature>
<feature type="region of interest" description="Disordered" evidence="1">
    <location>
        <begin position="1"/>
        <end position="48"/>
    </location>
</feature>
<feature type="compositionally biased region" description="Polar residues" evidence="1">
    <location>
        <begin position="1"/>
        <end position="12"/>
    </location>
</feature>
<feature type="compositionally biased region" description="Basic and acidic residues" evidence="1">
    <location>
        <begin position="27"/>
        <end position="36"/>
    </location>
</feature>
<protein>
    <recommendedName>
        <fullName>Small, acid-soluble spore protein N</fullName>
        <shortName>SASP N</shortName>
    </recommendedName>
</protein>
<dbReference type="EMBL" id="AL009126">
    <property type="protein sequence ID" value="CAE01455.2"/>
    <property type="molecule type" value="Genomic_DNA"/>
</dbReference>
<dbReference type="RefSeq" id="WP_003231569.1">
    <property type="nucleotide sequence ID" value="NZ_OZ025638.1"/>
</dbReference>
<dbReference type="RefSeq" id="YP_054579.2">
    <property type="nucleotide sequence ID" value="NC_000964.3"/>
</dbReference>
<dbReference type="FunCoup" id="Q7WY69">
    <property type="interactions" value="34"/>
</dbReference>
<dbReference type="STRING" id="224308.BSU18020"/>
<dbReference type="PaxDb" id="224308-BSU18020"/>
<dbReference type="EnsemblBacteria" id="CAE01455">
    <property type="protein sequence ID" value="CAE01455"/>
    <property type="gene ID" value="BSU_18020"/>
</dbReference>
<dbReference type="GeneID" id="2914184"/>
<dbReference type="KEGG" id="bsu:BSU18020"/>
<dbReference type="PATRIC" id="fig|224308.179.peg.1964"/>
<dbReference type="InParanoid" id="Q7WY69"/>
<dbReference type="OrthoDB" id="2455637at2"/>
<dbReference type="BioCyc" id="BSUB:BSU18020-MONOMER"/>
<dbReference type="Proteomes" id="UP000001570">
    <property type="component" value="Chromosome"/>
</dbReference>
<dbReference type="GO" id="GO:0042601">
    <property type="term" value="C:endospore-forming forespore"/>
    <property type="evidence" value="ECO:0007669"/>
    <property type="project" value="InterPro"/>
</dbReference>
<dbReference type="GO" id="GO:0030436">
    <property type="term" value="P:asexual sporulation"/>
    <property type="evidence" value="ECO:0007669"/>
    <property type="project" value="UniProtKB-UniRule"/>
</dbReference>
<dbReference type="GO" id="GO:0030435">
    <property type="term" value="P:sporulation resulting in formation of a cellular spore"/>
    <property type="evidence" value="ECO:0007669"/>
    <property type="project" value="UniProtKB-KW"/>
</dbReference>
<dbReference type="HAMAP" id="MF_01505">
    <property type="entry name" value="SspN"/>
    <property type="match status" value="1"/>
</dbReference>
<dbReference type="InterPro" id="IPR012612">
    <property type="entry name" value="SASP_SspN"/>
</dbReference>
<dbReference type="NCBIfam" id="NF006904">
    <property type="entry name" value="PRK09398.1"/>
    <property type="match status" value="1"/>
</dbReference>
<dbReference type="Pfam" id="PF08177">
    <property type="entry name" value="SspN"/>
    <property type="match status" value="1"/>
</dbReference>
<proteinExistence type="evidence at transcript level"/>
<gene>
    <name type="primary">sspN</name>
    <name type="ordered locus">BSU18020</name>
</gene>
<organism>
    <name type="scientific">Bacillus subtilis (strain 168)</name>
    <dbReference type="NCBI Taxonomy" id="224308"/>
    <lineage>
        <taxon>Bacteria</taxon>
        <taxon>Bacillati</taxon>
        <taxon>Bacillota</taxon>
        <taxon>Bacilli</taxon>
        <taxon>Bacillales</taxon>
        <taxon>Bacillaceae</taxon>
        <taxon>Bacillus</taxon>
    </lineage>
</organism>
<name>SSPN_BACSU</name>
<reference key="1">
    <citation type="journal article" date="1997" name="Nature">
        <title>The complete genome sequence of the Gram-positive bacterium Bacillus subtilis.</title>
        <authorList>
            <person name="Kunst F."/>
            <person name="Ogasawara N."/>
            <person name="Moszer I."/>
            <person name="Albertini A.M."/>
            <person name="Alloni G."/>
            <person name="Azevedo V."/>
            <person name="Bertero M.G."/>
            <person name="Bessieres P."/>
            <person name="Bolotin A."/>
            <person name="Borchert S."/>
            <person name="Borriss R."/>
            <person name="Boursier L."/>
            <person name="Brans A."/>
            <person name="Braun M."/>
            <person name="Brignell S.C."/>
            <person name="Bron S."/>
            <person name="Brouillet S."/>
            <person name="Bruschi C.V."/>
            <person name="Caldwell B."/>
            <person name="Capuano V."/>
            <person name="Carter N.M."/>
            <person name="Choi S.-K."/>
            <person name="Codani J.-J."/>
            <person name="Connerton I.F."/>
            <person name="Cummings N.J."/>
            <person name="Daniel R.A."/>
            <person name="Denizot F."/>
            <person name="Devine K.M."/>
            <person name="Duesterhoeft A."/>
            <person name="Ehrlich S.D."/>
            <person name="Emmerson P.T."/>
            <person name="Entian K.-D."/>
            <person name="Errington J."/>
            <person name="Fabret C."/>
            <person name="Ferrari E."/>
            <person name="Foulger D."/>
            <person name="Fritz C."/>
            <person name="Fujita M."/>
            <person name="Fujita Y."/>
            <person name="Fuma S."/>
            <person name="Galizzi A."/>
            <person name="Galleron N."/>
            <person name="Ghim S.-Y."/>
            <person name="Glaser P."/>
            <person name="Goffeau A."/>
            <person name="Golightly E.J."/>
            <person name="Grandi G."/>
            <person name="Guiseppi G."/>
            <person name="Guy B.J."/>
            <person name="Haga K."/>
            <person name="Haiech J."/>
            <person name="Harwood C.R."/>
            <person name="Henaut A."/>
            <person name="Hilbert H."/>
            <person name="Holsappel S."/>
            <person name="Hosono S."/>
            <person name="Hullo M.-F."/>
            <person name="Itaya M."/>
            <person name="Jones L.-M."/>
            <person name="Joris B."/>
            <person name="Karamata D."/>
            <person name="Kasahara Y."/>
            <person name="Klaerr-Blanchard M."/>
            <person name="Klein C."/>
            <person name="Kobayashi Y."/>
            <person name="Koetter P."/>
            <person name="Koningstein G."/>
            <person name="Krogh S."/>
            <person name="Kumano M."/>
            <person name="Kurita K."/>
            <person name="Lapidus A."/>
            <person name="Lardinois S."/>
            <person name="Lauber J."/>
            <person name="Lazarevic V."/>
            <person name="Lee S.-M."/>
            <person name="Levine A."/>
            <person name="Liu H."/>
            <person name="Masuda S."/>
            <person name="Mauel C."/>
            <person name="Medigue C."/>
            <person name="Medina N."/>
            <person name="Mellado R.P."/>
            <person name="Mizuno M."/>
            <person name="Moestl D."/>
            <person name="Nakai S."/>
            <person name="Noback M."/>
            <person name="Noone D."/>
            <person name="O'Reilly M."/>
            <person name="Ogawa K."/>
            <person name="Ogiwara A."/>
            <person name="Oudega B."/>
            <person name="Park S.-H."/>
            <person name="Parro V."/>
            <person name="Pohl T.M."/>
            <person name="Portetelle D."/>
            <person name="Porwollik S."/>
            <person name="Prescott A.M."/>
            <person name="Presecan E."/>
            <person name="Pujic P."/>
            <person name="Purnelle B."/>
            <person name="Rapoport G."/>
            <person name="Rey M."/>
            <person name="Reynolds S."/>
            <person name="Rieger M."/>
            <person name="Rivolta C."/>
            <person name="Rocha E."/>
            <person name="Roche B."/>
            <person name="Rose M."/>
            <person name="Sadaie Y."/>
            <person name="Sato T."/>
            <person name="Scanlan E."/>
            <person name="Schleich S."/>
            <person name="Schroeter R."/>
            <person name="Scoffone F."/>
            <person name="Sekiguchi J."/>
            <person name="Sekowska A."/>
            <person name="Seror S.J."/>
            <person name="Serror P."/>
            <person name="Shin B.-S."/>
            <person name="Soldo B."/>
            <person name="Sorokin A."/>
            <person name="Tacconi E."/>
            <person name="Takagi T."/>
            <person name="Takahashi H."/>
            <person name="Takemaru K."/>
            <person name="Takeuchi M."/>
            <person name="Tamakoshi A."/>
            <person name="Tanaka T."/>
            <person name="Terpstra P."/>
            <person name="Tognoni A."/>
            <person name="Tosato V."/>
            <person name="Uchiyama S."/>
            <person name="Vandenbol M."/>
            <person name="Vannier F."/>
            <person name="Vassarotti A."/>
            <person name="Viari A."/>
            <person name="Wambutt R."/>
            <person name="Wedler E."/>
            <person name="Wedler H."/>
            <person name="Weitzenegger T."/>
            <person name="Winters P."/>
            <person name="Wipat A."/>
            <person name="Yamamoto H."/>
            <person name="Yamane K."/>
            <person name="Yasumoto K."/>
            <person name="Yata K."/>
            <person name="Yoshida K."/>
            <person name="Yoshikawa H.-F."/>
            <person name="Zumstein E."/>
            <person name="Yoshikawa H."/>
            <person name="Danchin A."/>
        </authorList>
    </citation>
    <scope>NUCLEOTIDE SEQUENCE [LARGE SCALE GENOMIC DNA]</scope>
    <source>
        <strain>168</strain>
    </source>
</reference>
<reference key="2">
    <citation type="journal article" date="2009" name="Microbiology">
        <title>From a consortium sequence to a unified sequence: the Bacillus subtilis 168 reference genome a decade later.</title>
        <authorList>
            <person name="Barbe V."/>
            <person name="Cruveiller S."/>
            <person name="Kunst F."/>
            <person name="Lenoble P."/>
            <person name="Meurice G."/>
            <person name="Sekowska A."/>
            <person name="Vallenet D."/>
            <person name="Wang T."/>
            <person name="Moszer I."/>
            <person name="Medigue C."/>
            <person name="Danchin A."/>
        </authorList>
    </citation>
    <scope>SEQUENCE REVISION TO 13</scope>
</reference>
<reference key="3">
    <citation type="journal article" date="1999" name="Gene">
        <title>Regulation of four genes encoding small, acid-soluble spore proteins in Bacillus subtilis.</title>
        <authorList>
            <person name="Cabrera-Hernandez A."/>
            <person name="Sanchez-Salas J.-L."/>
            <person name="Paidhungat M."/>
            <person name="Setlow P."/>
        </authorList>
    </citation>
    <scope>INDUCTION</scope>
</reference>